<dbReference type="EC" id="4.2.1.33" evidence="1"/>
<dbReference type="EMBL" id="CP000046">
    <property type="protein sequence ID" value="AAW37011.1"/>
    <property type="molecule type" value="Genomic_DNA"/>
</dbReference>
<dbReference type="RefSeq" id="WP_000531823.1">
    <property type="nucleotide sequence ID" value="NZ_JBGOFO010000006.1"/>
</dbReference>
<dbReference type="SMR" id="Q5HEE2"/>
<dbReference type="KEGG" id="sac:SACOL2048"/>
<dbReference type="HOGENOM" id="CLU_006714_3_4_9"/>
<dbReference type="UniPathway" id="UPA00048">
    <property type="reaction ID" value="UER00071"/>
</dbReference>
<dbReference type="Proteomes" id="UP000000530">
    <property type="component" value="Chromosome"/>
</dbReference>
<dbReference type="GO" id="GO:0003861">
    <property type="term" value="F:3-isopropylmalate dehydratase activity"/>
    <property type="evidence" value="ECO:0007669"/>
    <property type="project" value="UniProtKB-UniRule"/>
</dbReference>
<dbReference type="GO" id="GO:0051539">
    <property type="term" value="F:4 iron, 4 sulfur cluster binding"/>
    <property type="evidence" value="ECO:0007669"/>
    <property type="project" value="UniProtKB-KW"/>
</dbReference>
<dbReference type="GO" id="GO:0046872">
    <property type="term" value="F:metal ion binding"/>
    <property type="evidence" value="ECO:0007669"/>
    <property type="project" value="UniProtKB-KW"/>
</dbReference>
<dbReference type="GO" id="GO:0009098">
    <property type="term" value="P:L-leucine biosynthetic process"/>
    <property type="evidence" value="ECO:0007669"/>
    <property type="project" value="UniProtKB-UniRule"/>
</dbReference>
<dbReference type="CDD" id="cd01583">
    <property type="entry name" value="IPMI"/>
    <property type="match status" value="1"/>
</dbReference>
<dbReference type="Gene3D" id="3.30.499.10">
    <property type="entry name" value="Aconitase, domain 3"/>
    <property type="match status" value="2"/>
</dbReference>
<dbReference type="HAMAP" id="MF_01026">
    <property type="entry name" value="LeuC_type1"/>
    <property type="match status" value="1"/>
</dbReference>
<dbReference type="InterPro" id="IPR004430">
    <property type="entry name" value="3-IsopropMal_deHydase_lsu"/>
</dbReference>
<dbReference type="InterPro" id="IPR015931">
    <property type="entry name" value="Acnase/IPM_dHydase_lsu_aba_1/3"/>
</dbReference>
<dbReference type="InterPro" id="IPR001030">
    <property type="entry name" value="Acoase/IPM_deHydtase_lsu_aba"/>
</dbReference>
<dbReference type="InterPro" id="IPR018136">
    <property type="entry name" value="Aconitase_4Fe-4S_BS"/>
</dbReference>
<dbReference type="InterPro" id="IPR036008">
    <property type="entry name" value="Aconitase_4Fe-4S_dom"/>
</dbReference>
<dbReference type="InterPro" id="IPR050067">
    <property type="entry name" value="IPM_dehydratase_rel_enz"/>
</dbReference>
<dbReference type="InterPro" id="IPR033941">
    <property type="entry name" value="IPMI_cat"/>
</dbReference>
<dbReference type="NCBIfam" id="TIGR00170">
    <property type="entry name" value="leuC"/>
    <property type="match status" value="1"/>
</dbReference>
<dbReference type="NCBIfam" id="NF004016">
    <property type="entry name" value="PRK05478.1"/>
    <property type="match status" value="1"/>
</dbReference>
<dbReference type="NCBIfam" id="NF009116">
    <property type="entry name" value="PRK12466.1"/>
    <property type="match status" value="1"/>
</dbReference>
<dbReference type="PANTHER" id="PTHR43822:SF9">
    <property type="entry name" value="3-ISOPROPYLMALATE DEHYDRATASE"/>
    <property type="match status" value="1"/>
</dbReference>
<dbReference type="PANTHER" id="PTHR43822">
    <property type="entry name" value="HOMOACONITASE, MITOCHONDRIAL-RELATED"/>
    <property type="match status" value="1"/>
</dbReference>
<dbReference type="Pfam" id="PF00330">
    <property type="entry name" value="Aconitase"/>
    <property type="match status" value="1"/>
</dbReference>
<dbReference type="PRINTS" id="PR00415">
    <property type="entry name" value="ACONITASE"/>
</dbReference>
<dbReference type="SUPFAM" id="SSF53732">
    <property type="entry name" value="Aconitase iron-sulfur domain"/>
    <property type="match status" value="1"/>
</dbReference>
<dbReference type="PROSITE" id="PS00450">
    <property type="entry name" value="ACONITASE_1"/>
    <property type="match status" value="1"/>
</dbReference>
<dbReference type="PROSITE" id="PS01244">
    <property type="entry name" value="ACONITASE_2"/>
    <property type="match status" value="1"/>
</dbReference>
<proteinExistence type="inferred from homology"/>
<organism>
    <name type="scientific">Staphylococcus aureus (strain COL)</name>
    <dbReference type="NCBI Taxonomy" id="93062"/>
    <lineage>
        <taxon>Bacteria</taxon>
        <taxon>Bacillati</taxon>
        <taxon>Bacillota</taxon>
        <taxon>Bacilli</taxon>
        <taxon>Bacillales</taxon>
        <taxon>Staphylococcaceae</taxon>
        <taxon>Staphylococcus</taxon>
    </lineage>
</organism>
<sequence>MGQTLFDKVWNRHVLYGKLGEPQLLYIDLHLIHEVTSPQAFEGLRLQNRKLRRPDLTFATLDHNVPTIDIFNIKDEIANKQITTLQKNAIDFGVHIFDMGSDEQGIVHMVGPETGLTQPGKTIVCGDSHTATHGAFGAIAFGIGTSEVEHVFATQTLWQTKPKNLKIDINGTLPTGVYAKDIILHLIKTYGVDFGTGYALEFTGETIKNLSMDGRMTICNMAIEGGAKYGIIQPDDITFEYVKGRPFADNFAKSVDKWRELYSDDDAIFDRVIELDVSTLEPQVTWGTNPEMGVNFSEPFPEINDINDQRAYDYMGLEPGQKAEDIDLGYVFLGSCTNARLSDLIEASHIVKGNKVHPNITAIVVPGSRTVKKEAEKLGLDTIFKNAGFEWREPGCSMCLGMNPDQVPEGVHCASTSNRNFEGRQGKGARTHLVSPAMAAAAAIHGKFVDVRKVVV</sequence>
<name>LEUC_STAAC</name>
<feature type="chain" id="PRO_0000076811" description="3-isopropylmalate dehydratase large subunit">
    <location>
        <begin position="1"/>
        <end position="456"/>
    </location>
</feature>
<feature type="binding site" evidence="1">
    <location>
        <position position="336"/>
    </location>
    <ligand>
        <name>[4Fe-4S] cluster</name>
        <dbReference type="ChEBI" id="CHEBI:49883"/>
    </ligand>
</feature>
<feature type="binding site" evidence="1">
    <location>
        <position position="396"/>
    </location>
    <ligand>
        <name>[4Fe-4S] cluster</name>
        <dbReference type="ChEBI" id="CHEBI:49883"/>
    </ligand>
</feature>
<feature type="binding site" evidence="1">
    <location>
        <position position="399"/>
    </location>
    <ligand>
        <name>[4Fe-4S] cluster</name>
        <dbReference type="ChEBI" id="CHEBI:49883"/>
    </ligand>
</feature>
<keyword id="KW-0004">4Fe-4S</keyword>
<keyword id="KW-0028">Amino-acid biosynthesis</keyword>
<keyword id="KW-0100">Branched-chain amino acid biosynthesis</keyword>
<keyword id="KW-0408">Iron</keyword>
<keyword id="KW-0411">Iron-sulfur</keyword>
<keyword id="KW-0432">Leucine biosynthesis</keyword>
<keyword id="KW-0456">Lyase</keyword>
<keyword id="KW-0479">Metal-binding</keyword>
<protein>
    <recommendedName>
        <fullName evidence="1">3-isopropylmalate dehydratase large subunit</fullName>
        <ecNumber evidence="1">4.2.1.33</ecNumber>
    </recommendedName>
    <alternativeName>
        <fullName evidence="1">Alpha-IPM isomerase</fullName>
        <shortName evidence="1">IPMI</shortName>
    </alternativeName>
    <alternativeName>
        <fullName evidence="1">Isopropylmalate isomerase</fullName>
    </alternativeName>
</protein>
<comment type="function">
    <text evidence="1">Catalyzes the isomerization between 2-isopropylmalate and 3-isopropylmalate, via the formation of 2-isopropylmaleate.</text>
</comment>
<comment type="catalytic activity">
    <reaction evidence="1">
        <text>(2R,3S)-3-isopropylmalate = (2S)-2-isopropylmalate</text>
        <dbReference type="Rhea" id="RHEA:32287"/>
        <dbReference type="ChEBI" id="CHEBI:1178"/>
        <dbReference type="ChEBI" id="CHEBI:35121"/>
        <dbReference type="EC" id="4.2.1.33"/>
    </reaction>
</comment>
<comment type="cofactor">
    <cofactor evidence="1">
        <name>[4Fe-4S] cluster</name>
        <dbReference type="ChEBI" id="CHEBI:49883"/>
    </cofactor>
    <text evidence="1">Binds 1 [4Fe-4S] cluster per subunit.</text>
</comment>
<comment type="pathway">
    <text evidence="1">Amino-acid biosynthesis; L-leucine biosynthesis; L-leucine from 3-methyl-2-oxobutanoate: step 2/4.</text>
</comment>
<comment type="subunit">
    <text evidence="1">Heterodimer of LeuC and LeuD.</text>
</comment>
<comment type="similarity">
    <text evidence="1">Belongs to the aconitase/IPM isomerase family. LeuC type 1 subfamily.</text>
</comment>
<accession>Q5HEE2</accession>
<gene>
    <name evidence="1" type="primary">leuC</name>
    <name type="ordered locus">SACOL2048</name>
</gene>
<evidence type="ECO:0000255" key="1">
    <source>
        <dbReference type="HAMAP-Rule" id="MF_01026"/>
    </source>
</evidence>
<reference key="1">
    <citation type="journal article" date="2005" name="J. Bacteriol.">
        <title>Insights on evolution of virulence and resistance from the complete genome analysis of an early methicillin-resistant Staphylococcus aureus strain and a biofilm-producing methicillin-resistant Staphylococcus epidermidis strain.</title>
        <authorList>
            <person name="Gill S.R."/>
            <person name="Fouts D.E."/>
            <person name="Archer G.L."/>
            <person name="Mongodin E.F."/>
            <person name="DeBoy R.T."/>
            <person name="Ravel J."/>
            <person name="Paulsen I.T."/>
            <person name="Kolonay J.F."/>
            <person name="Brinkac L.M."/>
            <person name="Beanan M.J."/>
            <person name="Dodson R.J."/>
            <person name="Daugherty S.C."/>
            <person name="Madupu R."/>
            <person name="Angiuoli S.V."/>
            <person name="Durkin A.S."/>
            <person name="Haft D.H."/>
            <person name="Vamathevan J.J."/>
            <person name="Khouri H."/>
            <person name="Utterback T.R."/>
            <person name="Lee C."/>
            <person name="Dimitrov G."/>
            <person name="Jiang L."/>
            <person name="Qin H."/>
            <person name="Weidman J."/>
            <person name="Tran K."/>
            <person name="Kang K.H."/>
            <person name="Hance I.R."/>
            <person name="Nelson K.E."/>
            <person name="Fraser C.M."/>
        </authorList>
    </citation>
    <scope>NUCLEOTIDE SEQUENCE [LARGE SCALE GENOMIC DNA]</scope>
    <source>
        <strain>COL</strain>
    </source>
</reference>